<comment type="function">
    <text evidence="1">Component of the acetyl coenzyme A carboxylase (ACC) complex. Biotin carboxylase (BC) catalyzes the carboxylation of biotin on its carrier protein (BCCP) and then the CO(2) group is transferred by the transcarboxylase to acetyl-CoA to form malonyl-CoA.</text>
</comment>
<comment type="catalytic activity">
    <reaction evidence="1">
        <text>N(6)-carboxybiotinyl-L-lysyl-[protein] + acetyl-CoA = N(6)-biotinyl-L-lysyl-[protein] + malonyl-CoA</text>
        <dbReference type="Rhea" id="RHEA:54728"/>
        <dbReference type="Rhea" id="RHEA-COMP:10505"/>
        <dbReference type="Rhea" id="RHEA-COMP:10506"/>
        <dbReference type="ChEBI" id="CHEBI:57288"/>
        <dbReference type="ChEBI" id="CHEBI:57384"/>
        <dbReference type="ChEBI" id="CHEBI:83144"/>
        <dbReference type="ChEBI" id="CHEBI:83145"/>
        <dbReference type="EC" id="2.1.3.15"/>
    </reaction>
</comment>
<comment type="cofactor">
    <cofactor evidence="1">
        <name>Zn(2+)</name>
        <dbReference type="ChEBI" id="CHEBI:29105"/>
    </cofactor>
    <text evidence="1">Binds 1 zinc ion per subunit.</text>
</comment>
<comment type="pathway">
    <text evidence="1">Lipid metabolism; malonyl-CoA biosynthesis; malonyl-CoA from acetyl-CoA: step 1/1.</text>
</comment>
<comment type="subunit">
    <text evidence="1">Acetyl-CoA carboxylase is a heterohexamer composed of biotin carboxyl carrier protein (AccB), biotin carboxylase (AccC) and two subunits each of ACCase subunit alpha (AccA) and ACCase subunit beta (AccD).</text>
</comment>
<comment type="subcellular location">
    <subcellularLocation>
        <location evidence="1">Cytoplasm</location>
    </subcellularLocation>
</comment>
<comment type="similarity">
    <text evidence="1">Belongs to the AccD/PCCB family.</text>
</comment>
<reference key="1">
    <citation type="journal article" date="2003" name="Proc. Natl. Acad. Sci. U.S.A.">
        <title>The genome sequence of Blochmannia floridanus: comparative analysis of reduced genomes.</title>
        <authorList>
            <person name="Gil R."/>
            <person name="Silva F.J."/>
            <person name="Zientz E."/>
            <person name="Delmotte F."/>
            <person name="Gonzalez-Candelas F."/>
            <person name="Latorre A."/>
            <person name="Rausell C."/>
            <person name="Kamerbeek J."/>
            <person name="Gadau J."/>
            <person name="Hoelldobler B."/>
            <person name="van Ham R.C.H.J."/>
            <person name="Gross R."/>
            <person name="Moya A."/>
        </authorList>
    </citation>
    <scope>NUCLEOTIDE SEQUENCE [LARGE SCALE GENOMIC DNA]</scope>
</reference>
<name>ACCD_BLOFL</name>
<evidence type="ECO:0000255" key="1">
    <source>
        <dbReference type="HAMAP-Rule" id="MF_01395"/>
    </source>
</evidence>
<evidence type="ECO:0000255" key="2">
    <source>
        <dbReference type="PROSITE-ProRule" id="PRU01136"/>
    </source>
</evidence>
<keyword id="KW-0067">ATP-binding</keyword>
<keyword id="KW-0963">Cytoplasm</keyword>
<keyword id="KW-0275">Fatty acid biosynthesis</keyword>
<keyword id="KW-0276">Fatty acid metabolism</keyword>
<keyword id="KW-0444">Lipid biosynthesis</keyword>
<keyword id="KW-0443">Lipid metabolism</keyword>
<keyword id="KW-0479">Metal-binding</keyword>
<keyword id="KW-0547">Nucleotide-binding</keyword>
<keyword id="KW-1185">Reference proteome</keyword>
<keyword id="KW-0808">Transferase</keyword>
<keyword id="KW-0862">Zinc</keyword>
<keyword id="KW-0863">Zinc-finger</keyword>
<sequence length="287" mass="32159">MNWIERIINKNIVLTTKKMHVPEGIWTKCSGCVQLLYTKELERNLQVCPKCDFHMKISARSRLLAFLDQGSVCELGQELLPKDIFKFKDRKKYKDRLIDAQKKTQEKEALIVMQGTIYSMQVVVAAFEFDFIGGSMSSAVGSRFVQAVNQSLKLKCPFVCFSSSGGARMQEAFVSLMQMAKTSAALAVLYDRCLPYISVLTNPTMGGVSASLGMLGDINIAEPKALIGFAGPRVIEQTVREKLPLGFQRSEFLLEKGVIDLIVRRPDMRLKIANLLSKLTQQSFSEK</sequence>
<gene>
    <name evidence="1" type="primary">accD</name>
    <name type="ordered locus">Bfl495</name>
</gene>
<feature type="chain" id="PRO_0000358956" description="Acetyl-coenzyme A carboxylase carboxyl transferase subunit beta">
    <location>
        <begin position="1"/>
        <end position="287"/>
    </location>
</feature>
<feature type="domain" description="CoA carboxyltransferase N-terminal" evidence="2">
    <location>
        <begin position="25"/>
        <end position="287"/>
    </location>
</feature>
<feature type="zinc finger region" description="C4-type" evidence="1">
    <location>
        <begin position="29"/>
        <end position="51"/>
    </location>
</feature>
<feature type="binding site" evidence="1">
    <location>
        <position position="29"/>
    </location>
    <ligand>
        <name>Zn(2+)</name>
        <dbReference type="ChEBI" id="CHEBI:29105"/>
    </ligand>
</feature>
<feature type="binding site" evidence="1">
    <location>
        <position position="32"/>
    </location>
    <ligand>
        <name>Zn(2+)</name>
        <dbReference type="ChEBI" id="CHEBI:29105"/>
    </ligand>
</feature>
<feature type="binding site" evidence="1">
    <location>
        <position position="48"/>
    </location>
    <ligand>
        <name>Zn(2+)</name>
        <dbReference type="ChEBI" id="CHEBI:29105"/>
    </ligand>
</feature>
<feature type="binding site" evidence="1">
    <location>
        <position position="51"/>
    </location>
    <ligand>
        <name>Zn(2+)</name>
        <dbReference type="ChEBI" id="CHEBI:29105"/>
    </ligand>
</feature>
<protein>
    <recommendedName>
        <fullName evidence="1">Acetyl-coenzyme A carboxylase carboxyl transferase subunit beta</fullName>
        <shortName evidence="1">ACCase subunit beta</shortName>
        <shortName evidence="1">Acetyl-CoA carboxylase carboxyltransferase subunit beta</shortName>
        <ecNumber evidence="1">2.1.3.15</ecNumber>
    </recommendedName>
</protein>
<organism>
    <name type="scientific">Blochmanniella floridana</name>
    <dbReference type="NCBI Taxonomy" id="203907"/>
    <lineage>
        <taxon>Bacteria</taxon>
        <taxon>Pseudomonadati</taxon>
        <taxon>Pseudomonadota</taxon>
        <taxon>Gammaproteobacteria</taxon>
        <taxon>Enterobacterales</taxon>
        <taxon>Enterobacteriaceae</taxon>
        <taxon>ant endosymbionts</taxon>
        <taxon>Candidatus Blochmanniella</taxon>
    </lineage>
</organism>
<dbReference type="EC" id="2.1.3.15" evidence="1"/>
<dbReference type="EMBL" id="BX248583">
    <property type="protein sequence ID" value="CAD83184.1"/>
    <property type="molecule type" value="Genomic_DNA"/>
</dbReference>
<dbReference type="SMR" id="Q7VRV0"/>
<dbReference type="STRING" id="203907.Bfl495"/>
<dbReference type="KEGG" id="bfl:Bfl495"/>
<dbReference type="eggNOG" id="COG0777">
    <property type="taxonomic scope" value="Bacteria"/>
</dbReference>
<dbReference type="HOGENOM" id="CLU_015486_1_0_6"/>
<dbReference type="OrthoDB" id="9772975at2"/>
<dbReference type="UniPathway" id="UPA00655">
    <property type="reaction ID" value="UER00711"/>
</dbReference>
<dbReference type="Proteomes" id="UP000002192">
    <property type="component" value="Chromosome"/>
</dbReference>
<dbReference type="GO" id="GO:0009329">
    <property type="term" value="C:acetate CoA-transferase complex"/>
    <property type="evidence" value="ECO:0007669"/>
    <property type="project" value="TreeGrafter"/>
</dbReference>
<dbReference type="GO" id="GO:0003989">
    <property type="term" value="F:acetyl-CoA carboxylase activity"/>
    <property type="evidence" value="ECO:0007669"/>
    <property type="project" value="InterPro"/>
</dbReference>
<dbReference type="GO" id="GO:0005524">
    <property type="term" value="F:ATP binding"/>
    <property type="evidence" value="ECO:0007669"/>
    <property type="project" value="UniProtKB-KW"/>
</dbReference>
<dbReference type="GO" id="GO:0016743">
    <property type="term" value="F:carboxyl- or carbamoyltransferase activity"/>
    <property type="evidence" value="ECO:0007669"/>
    <property type="project" value="UniProtKB-UniRule"/>
</dbReference>
<dbReference type="GO" id="GO:0008270">
    <property type="term" value="F:zinc ion binding"/>
    <property type="evidence" value="ECO:0007669"/>
    <property type="project" value="UniProtKB-UniRule"/>
</dbReference>
<dbReference type="GO" id="GO:0006633">
    <property type="term" value="P:fatty acid biosynthetic process"/>
    <property type="evidence" value="ECO:0007669"/>
    <property type="project" value="UniProtKB-KW"/>
</dbReference>
<dbReference type="GO" id="GO:2001295">
    <property type="term" value="P:malonyl-CoA biosynthetic process"/>
    <property type="evidence" value="ECO:0007669"/>
    <property type="project" value="UniProtKB-UniRule"/>
</dbReference>
<dbReference type="Gene3D" id="3.90.226.10">
    <property type="entry name" value="2-enoyl-CoA Hydratase, Chain A, domain 1"/>
    <property type="match status" value="1"/>
</dbReference>
<dbReference type="HAMAP" id="MF_01395">
    <property type="entry name" value="AcetylCoA_CT_beta"/>
    <property type="match status" value="1"/>
</dbReference>
<dbReference type="InterPro" id="IPR034733">
    <property type="entry name" value="AcCoA_carboxyl_beta"/>
</dbReference>
<dbReference type="InterPro" id="IPR000438">
    <property type="entry name" value="Acetyl_CoA_COase_Trfase_b_su"/>
</dbReference>
<dbReference type="InterPro" id="IPR029045">
    <property type="entry name" value="ClpP/crotonase-like_dom_sf"/>
</dbReference>
<dbReference type="InterPro" id="IPR011762">
    <property type="entry name" value="COA_CT_N"/>
</dbReference>
<dbReference type="InterPro" id="IPR041010">
    <property type="entry name" value="Znf-ACC"/>
</dbReference>
<dbReference type="NCBIfam" id="TIGR00515">
    <property type="entry name" value="accD"/>
    <property type="match status" value="1"/>
</dbReference>
<dbReference type="PANTHER" id="PTHR42995">
    <property type="entry name" value="ACETYL-COENZYME A CARBOXYLASE CARBOXYL TRANSFERASE SUBUNIT BETA, CHLOROPLASTIC"/>
    <property type="match status" value="1"/>
</dbReference>
<dbReference type="PANTHER" id="PTHR42995:SF5">
    <property type="entry name" value="ACETYL-COENZYME A CARBOXYLASE CARBOXYL TRANSFERASE SUBUNIT BETA, CHLOROPLASTIC"/>
    <property type="match status" value="1"/>
</dbReference>
<dbReference type="Pfam" id="PF01039">
    <property type="entry name" value="Carboxyl_trans"/>
    <property type="match status" value="1"/>
</dbReference>
<dbReference type="Pfam" id="PF17848">
    <property type="entry name" value="Zn_ribbon_ACC"/>
    <property type="match status" value="1"/>
</dbReference>
<dbReference type="PRINTS" id="PR01070">
    <property type="entry name" value="ACCCTRFRASEB"/>
</dbReference>
<dbReference type="SUPFAM" id="SSF52096">
    <property type="entry name" value="ClpP/crotonase"/>
    <property type="match status" value="1"/>
</dbReference>
<dbReference type="PROSITE" id="PS50980">
    <property type="entry name" value="COA_CT_NTER"/>
    <property type="match status" value="1"/>
</dbReference>
<accession>Q7VRV0</accession>
<proteinExistence type="inferred from homology"/>